<keyword id="KW-0002">3D-structure</keyword>
<keyword id="KW-0963">Cytoplasm</keyword>
<keyword id="KW-1185">Reference proteome</keyword>
<keyword id="KW-0687">Ribonucleoprotein</keyword>
<keyword id="KW-0689">Ribosomal protein</keyword>
<accession>Q5ANA1</accession>
<organism>
    <name type="scientific">Candida albicans (strain SC5314 / ATCC MYA-2876)</name>
    <name type="common">Yeast</name>
    <dbReference type="NCBI Taxonomy" id="237561"/>
    <lineage>
        <taxon>Eukaryota</taxon>
        <taxon>Fungi</taxon>
        <taxon>Dikarya</taxon>
        <taxon>Ascomycota</taxon>
        <taxon>Saccharomycotina</taxon>
        <taxon>Pichiomycetes</taxon>
        <taxon>Debaryomycetaceae</taxon>
        <taxon>Candida/Lodderomyces clade</taxon>
        <taxon>Candida</taxon>
    </lineage>
</organism>
<evidence type="ECO:0000256" key="1">
    <source>
        <dbReference type="SAM" id="MobiDB-lite"/>
    </source>
</evidence>
<evidence type="ECO:0000269" key="2">
    <source>
    </source>
</evidence>
<evidence type="ECO:0000303" key="3">
    <source>
    </source>
</evidence>
<evidence type="ECO:0000305" key="4"/>
<evidence type="ECO:0000305" key="5">
    <source>
    </source>
</evidence>
<evidence type="ECO:0007744" key="6">
    <source>
        <dbReference type="PDB" id="7PZY"/>
    </source>
</evidence>
<evidence type="ECO:0007744" key="7">
    <source>
        <dbReference type="PDB" id="7Q0F"/>
    </source>
</evidence>
<evidence type="ECO:0007744" key="8">
    <source>
        <dbReference type="PDB" id="7Q0P"/>
    </source>
</evidence>
<comment type="function">
    <text evidence="5">Component of the ribosome, a large ribonucleoprotein complex responsible for the synthesis of proteins in the cell. The small ribosomal subunit (SSU) binds messenger RNAs (mRNAs) and translates the encoded message by selecting cognate aminoacyl-transfer RNA (tRNA) molecules. The large subunit (LSU) contains the ribosomal catalytic site termed the peptidyl transferase center (PTC), which catalyzes the formation of peptide bonds, thereby polymerizing the amino acids delivered by tRNAs into a polypeptide chain. The nascent polypeptides leave the ribosome through a tunnel in the LSU and interact with protein factors that function in enzymatic processing, targeting, and the membrane insertion of nascent chains at the exit of the ribosomal tunnel.</text>
</comment>
<comment type="subunit">
    <text evidence="2">Component of the large ribosomal subunit (PubMed:35613268). Mature ribosomes consist of a small (40S) and a large (60S) subunit (PubMed:35613268). The 40S subunit contains about 32 different proteins and 1 molecule of RNA (18S) (PubMed:35613268). The 60S subunit contains 45 different proteins and 3 molecules of RNA (25S, 5.8S and 5S) (PubMed:35613268).</text>
</comment>
<comment type="subcellular location">
    <subcellularLocation>
        <location evidence="5">Cytoplasm</location>
    </subcellularLocation>
</comment>
<comment type="similarity">
    <text evidence="4">Belongs to the eukaryotic ribosomal protein eL8 family.</text>
</comment>
<dbReference type="EMBL" id="CP017625">
    <property type="protein sequence ID" value="AOW28539.1"/>
    <property type="molecule type" value="Genomic_DNA"/>
</dbReference>
<dbReference type="RefSeq" id="XP_723211.1">
    <property type="nucleotide sequence ID" value="XM_718118.1"/>
</dbReference>
<dbReference type="PDB" id="7PZY">
    <property type="method" value="EM"/>
    <property type="resolution" value="2.32 A"/>
    <property type="chains" value="p=1-262"/>
</dbReference>
<dbReference type="PDB" id="7Q08">
    <property type="method" value="EM"/>
    <property type="resolution" value="2.56 A"/>
    <property type="chains" value="p=1-262"/>
</dbReference>
<dbReference type="PDB" id="7Q0F">
    <property type="method" value="EM"/>
    <property type="resolution" value="2.64 A"/>
    <property type="chains" value="p=1-262"/>
</dbReference>
<dbReference type="PDB" id="7Q0P">
    <property type="method" value="EM"/>
    <property type="resolution" value="2.77 A"/>
    <property type="chains" value="p=1-262"/>
</dbReference>
<dbReference type="PDB" id="7Q0R">
    <property type="method" value="EM"/>
    <property type="resolution" value="2.67 A"/>
    <property type="chains" value="p=1-262"/>
</dbReference>
<dbReference type="PDB" id="8C3A">
    <property type="method" value="X-ray"/>
    <property type="resolution" value="3.00 A"/>
    <property type="chains" value="BC/p=1-262"/>
</dbReference>
<dbReference type="PDB" id="8OGJ">
    <property type="method" value="EM"/>
    <property type="resolution" value="3.10 A"/>
    <property type="chains" value="p=1-262"/>
</dbReference>
<dbReference type="PDB" id="8OH6">
    <property type="method" value="X-ray"/>
    <property type="resolution" value="3.35 A"/>
    <property type="chains" value="BC/p=1-262"/>
</dbReference>
<dbReference type="PDB" id="8OI5">
    <property type="method" value="X-ray"/>
    <property type="resolution" value="2.90 A"/>
    <property type="chains" value="BC/p=1-262"/>
</dbReference>
<dbReference type="PDB" id="8OJ3">
    <property type="method" value="X-ray"/>
    <property type="resolution" value="3.50 A"/>
    <property type="chains" value="BC/p=1-262"/>
</dbReference>
<dbReference type="PDBsum" id="7PZY"/>
<dbReference type="PDBsum" id="7Q08"/>
<dbReference type="PDBsum" id="7Q0F"/>
<dbReference type="PDBsum" id="7Q0P"/>
<dbReference type="PDBsum" id="7Q0R"/>
<dbReference type="PDBsum" id="8C3A"/>
<dbReference type="PDBsum" id="8OGJ"/>
<dbReference type="PDBsum" id="8OH6"/>
<dbReference type="PDBsum" id="8OI5"/>
<dbReference type="PDBsum" id="8OJ3"/>
<dbReference type="EMDB" id="EMD-13737"/>
<dbReference type="EMDB" id="EMD-13741"/>
<dbReference type="EMDB" id="EMD-13744"/>
<dbReference type="EMDB" id="EMD-13749"/>
<dbReference type="EMDB" id="EMD-13750"/>
<dbReference type="SMR" id="Q5ANA1"/>
<dbReference type="FunCoup" id="Q5ANA1">
    <property type="interactions" value="1248"/>
</dbReference>
<dbReference type="STRING" id="237561.Q5ANA1"/>
<dbReference type="EnsemblFungi" id="C3_05240C_A-T">
    <property type="protein sequence ID" value="C3_05240C_A-T-p1"/>
    <property type="gene ID" value="C3_05240C_A"/>
</dbReference>
<dbReference type="GeneID" id="3635198"/>
<dbReference type="KEGG" id="cal:CAALFM_C305240CA"/>
<dbReference type="CGD" id="CAL0000183492">
    <property type="gene designation" value="RPL8B"/>
</dbReference>
<dbReference type="VEuPathDB" id="FungiDB:C3_05240C_A"/>
<dbReference type="eggNOG" id="KOG3166">
    <property type="taxonomic scope" value="Eukaryota"/>
</dbReference>
<dbReference type="HOGENOM" id="CLU_055193_0_1_1"/>
<dbReference type="InParanoid" id="Q5ANA1"/>
<dbReference type="OMA" id="AICVQNV"/>
<dbReference type="OrthoDB" id="29563at2759"/>
<dbReference type="Proteomes" id="UP000000559">
    <property type="component" value="Chromosome 3"/>
</dbReference>
<dbReference type="GO" id="GO:0022625">
    <property type="term" value="C:cytosolic large ribosomal subunit"/>
    <property type="evidence" value="ECO:0000318"/>
    <property type="project" value="GO_Central"/>
</dbReference>
<dbReference type="GO" id="GO:0003723">
    <property type="term" value="F:RNA binding"/>
    <property type="evidence" value="ECO:0000318"/>
    <property type="project" value="GO_Central"/>
</dbReference>
<dbReference type="GO" id="GO:0000470">
    <property type="term" value="P:maturation of LSU-rRNA"/>
    <property type="evidence" value="ECO:0000318"/>
    <property type="project" value="GO_Central"/>
</dbReference>
<dbReference type="FunFam" id="3.30.1330.30:FF:000003">
    <property type="entry name" value="60S ribosomal protein L7a"/>
    <property type="match status" value="1"/>
</dbReference>
<dbReference type="Gene3D" id="3.30.1330.30">
    <property type="match status" value="1"/>
</dbReference>
<dbReference type="InterPro" id="IPR050257">
    <property type="entry name" value="eL8/uL1-like"/>
</dbReference>
<dbReference type="InterPro" id="IPR029064">
    <property type="entry name" value="Ribosomal_eL30-like_sf"/>
</dbReference>
<dbReference type="InterPro" id="IPR004037">
    <property type="entry name" value="Ribosomal_eL8-like_CS"/>
</dbReference>
<dbReference type="InterPro" id="IPR004038">
    <property type="entry name" value="Ribosomal_eL8/eL30/eS12/Gad45"/>
</dbReference>
<dbReference type="InterPro" id="IPR018492">
    <property type="entry name" value="Ribosomal_eL8/Nhp2"/>
</dbReference>
<dbReference type="InterPro" id="IPR001921">
    <property type="entry name" value="Ribosomal_eL8_euk"/>
</dbReference>
<dbReference type="PANTHER" id="PTHR23105">
    <property type="entry name" value="RIBOSOMAL PROTEIN L7AE FAMILY MEMBER"/>
    <property type="match status" value="1"/>
</dbReference>
<dbReference type="Pfam" id="PF01248">
    <property type="entry name" value="Ribosomal_L7Ae"/>
    <property type="match status" value="1"/>
</dbReference>
<dbReference type="PRINTS" id="PR00881">
    <property type="entry name" value="L7ARS6FAMILY"/>
</dbReference>
<dbReference type="PRINTS" id="PR00882">
    <property type="entry name" value="RIBOSOMALL7A"/>
</dbReference>
<dbReference type="SUPFAM" id="SSF55315">
    <property type="entry name" value="L30e-like"/>
    <property type="match status" value="1"/>
</dbReference>
<dbReference type="PROSITE" id="PS01082">
    <property type="entry name" value="RIBOSOMAL_L7AE"/>
    <property type="match status" value="1"/>
</dbReference>
<protein>
    <recommendedName>
        <fullName evidence="3">Large ribosomal subunit protein eL8B</fullName>
    </recommendedName>
    <alternativeName>
        <fullName>60S ribosomal protein L8-B</fullName>
    </alternativeName>
</protein>
<gene>
    <name evidence="3" type="primary">RPL8B</name>
    <name type="synonym">RPL81</name>
    <name type="ordered locus">orf19.6002</name>
    <name type="ORF">CAALFM_C305240CA</name>
</gene>
<feature type="chain" id="PRO_0000456494" description="Large ribosomal subunit protein eL8B">
    <location>
        <begin position="1"/>
        <end position="262"/>
    </location>
</feature>
<feature type="region of interest" description="Disordered" evidence="1">
    <location>
        <begin position="1"/>
        <end position="36"/>
    </location>
</feature>
<reference key="1">
    <citation type="journal article" date="2004" name="Proc. Natl. Acad. Sci. U.S.A.">
        <title>The diploid genome sequence of Candida albicans.</title>
        <authorList>
            <person name="Jones T."/>
            <person name="Federspiel N.A."/>
            <person name="Chibana H."/>
            <person name="Dungan J."/>
            <person name="Kalman S."/>
            <person name="Magee B.B."/>
            <person name="Newport G."/>
            <person name="Thorstenson Y.R."/>
            <person name="Agabian N."/>
            <person name="Magee P.T."/>
            <person name="Davis R.W."/>
            <person name="Scherer S."/>
        </authorList>
    </citation>
    <scope>NUCLEOTIDE SEQUENCE [LARGE SCALE GENOMIC DNA]</scope>
    <source>
        <strain>SC5314 / ATCC MYA-2876</strain>
    </source>
</reference>
<reference key="2">
    <citation type="journal article" date="2007" name="Genome Biol.">
        <title>Assembly of the Candida albicans genome into sixteen supercontigs aligned on the eight chromosomes.</title>
        <authorList>
            <person name="van het Hoog M."/>
            <person name="Rast T.J."/>
            <person name="Martchenko M."/>
            <person name="Grindle S."/>
            <person name="Dignard D."/>
            <person name="Hogues H."/>
            <person name="Cuomo C."/>
            <person name="Berriman M."/>
            <person name="Scherer S."/>
            <person name="Magee B.B."/>
            <person name="Whiteway M."/>
            <person name="Chibana H."/>
            <person name="Nantel A."/>
            <person name="Magee P.T."/>
        </authorList>
    </citation>
    <scope>GENOME REANNOTATION</scope>
    <source>
        <strain>SC5314 / ATCC MYA-2876</strain>
    </source>
</reference>
<reference key="3">
    <citation type="journal article" date="2013" name="Genome Biol.">
        <title>Assembly of a phased diploid Candida albicans genome facilitates allele-specific measurements and provides a simple model for repeat and indel structure.</title>
        <authorList>
            <person name="Muzzey D."/>
            <person name="Schwartz K."/>
            <person name="Weissman J.S."/>
            <person name="Sherlock G."/>
        </authorList>
    </citation>
    <scope>NUCLEOTIDE SEQUENCE [LARGE SCALE GENOMIC DNA]</scope>
    <scope>GENOME REANNOTATION</scope>
    <source>
        <strain>SC5314 / ATCC MYA-2876</strain>
    </source>
</reference>
<reference evidence="6 7 8" key="4">
    <citation type="journal article" date="2022" name="Sci. Adv.">
        <title>E-site drug specificity of the human pathogen Candida albicans ribosome.</title>
        <authorList>
            <person name="Zgadzay Y."/>
            <person name="Kolosova O."/>
            <person name="Stetsenko A."/>
            <person name="Wu C."/>
            <person name="Bruchlen D."/>
            <person name="Usachev K."/>
            <person name="Validov S."/>
            <person name="Jenner L."/>
            <person name="Rogachev A."/>
            <person name="Yusupova G."/>
            <person name="Sachs M.S."/>
            <person name="Guskov A."/>
            <person name="Yusupov M."/>
        </authorList>
    </citation>
    <scope>STRUCTURE BY ELECTRON MICROSCOPY (2.32 ANGSTROMS) OF THE 80S RIBOSOME</scope>
    <scope>SUBUNIT</scope>
</reference>
<name>RL8B_CANAL</name>
<sequence>MAPKGKKVAPAPLATKSAKSSESKNPLFESTPKNFGIGQSIQPKRNLSRFVKWPEYVRLQRQKKILSLRLKVPPSIAQFSQTLDKNTAAQAFKLLNKYRPETSAEKKERLTKEAAAIAEGKTAKDVSPKPVVVKYGLNHVVSLIENKKAKLVLIANDVDPIELVVFLPALCKKMGVPYAIVKGKARLGTLVHKKTSAVAALTEVNSADEAELSKLISTINANYIEKYEENRKHWGGGIMGSKANDKIAKKAKAAAAAVSTSN</sequence>
<proteinExistence type="evidence at protein level"/>